<protein>
    <recommendedName>
        <fullName evidence="1">Ribosome-binding factor A</fullName>
    </recommendedName>
</protein>
<dbReference type="EMBL" id="CP000705">
    <property type="protein sequence ID" value="ABQ82965.1"/>
    <property type="molecule type" value="Genomic_DNA"/>
</dbReference>
<dbReference type="RefSeq" id="WP_003665800.1">
    <property type="nucleotide sequence ID" value="NZ_AZDD01000017.1"/>
</dbReference>
<dbReference type="SMR" id="A5VJE1"/>
<dbReference type="STRING" id="557436.Lreu_0700"/>
<dbReference type="GeneID" id="77190753"/>
<dbReference type="KEGG" id="lre:Lreu_0700"/>
<dbReference type="PATRIC" id="fig|557436.17.peg.555"/>
<dbReference type="eggNOG" id="COG0858">
    <property type="taxonomic scope" value="Bacteria"/>
</dbReference>
<dbReference type="HOGENOM" id="CLU_089475_3_0_9"/>
<dbReference type="Proteomes" id="UP000001991">
    <property type="component" value="Chromosome"/>
</dbReference>
<dbReference type="GO" id="GO:0005829">
    <property type="term" value="C:cytosol"/>
    <property type="evidence" value="ECO:0007669"/>
    <property type="project" value="TreeGrafter"/>
</dbReference>
<dbReference type="GO" id="GO:0043024">
    <property type="term" value="F:ribosomal small subunit binding"/>
    <property type="evidence" value="ECO:0007669"/>
    <property type="project" value="TreeGrafter"/>
</dbReference>
<dbReference type="GO" id="GO:0030490">
    <property type="term" value="P:maturation of SSU-rRNA"/>
    <property type="evidence" value="ECO:0007669"/>
    <property type="project" value="UniProtKB-UniRule"/>
</dbReference>
<dbReference type="Gene3D" id="3.30.300.20">
    <property type="match status" value="1"/>
</dbReference>
<dbReference type="HAMAP" id="MF_00003">
    <property type="entry name" value="RbfA"/>
    <property type="match status" value="1"/>
</dbReference>
<dbReference type="InterPro" id="IPR015946">
    <property type="entry name" value="KH_dom-like_a/b"/>
</dbReference>
<dbReference type="InterPro" id="IPR000238">
    <property type="entry name" value="RbfA"/>
</dbReference>
<dbReference type="InterPro" id="IPR023799">
    <property type="entry name" value="RbfA_dom_sf"/>
</dbReference>
<dbReference type="InterPro" id="IPR020053">
    <property type="entry name" value="Ribosome-bd_factorA_CS"/>
</dbReference>
<dbReference type="NCBIfam" id="TIGR00082">
    <property type="entry name" value="rbfA"/>
    <property type="match status" value="1"/>
</dbReference>
<dbReference type="PANTHER" id="PTHR33515">
    <property type="entry name" value="RIBOSOME-BINDING FACTOR A, CHLOROPLASTIC-RELATED"/>
    <property type="match status" value="1"/>
</dbReference>
<dbReference type="PANTHER" id="PTHR33515:SF1">
    <property type="entry name" value="RIBOSOME-BINDING FACTOR A, CHLOROPLASTIC-RELATED"/>
    <property type="match status" value="1"/>
</dbReference>
<dbReference type="Pfam" id="PF02033">
    <property type="entry name" value="RBFA"/>
    <property type="match status" value="1"/>
</dbReference>
<dbReference type="SUPFAM" id="SSF89919">
    <property type="entry name" value="Ribosome-binding factor A, RbfA"/>
    <property type="match status" value="1"/>
</dbReference>
<dbReference type="PROSITE" id="PS01319">
    <property type="entry name" value="RBFA"/>
    <property type="match status" value="1"/>
</dbReference>
<sequence>MPSKQYRVDRLAQEIQKDVDEILLKRVRDPRVQNVTITGVDVTGDLQQATIYYSILSDLASDAEKAQAGLDKATGLIRSELGARLNIFKTPEIKFVRDPSVAYGSRIDQLINDLHKKEK</sequence>
<gene>
    <name evidence="1" type="primary">rbfA</name>
    <name type="ordered locus">Lreu_0700</name>
</gene>
<feature type="chain" id="PRO_0000321227" description="Ribosome-binding factor A">
    <location>
        <begin position="1"/>
        <end position="119"/>
    </location>
</feature>
<accession>A5VJE1</accession>
<keyword id="KW-0963">Cytoplasm</keyword>
<keyword id="KW-1185">Reference proteome</keyword>
<keyword id="KW-0690">Ribosome biogenesis</keyword>
<proteinExistence type="inferred from homology"/>
<evidence type="ECO:0000255" key="1">
    <source>
        <dbReference type="HAMAP-Rule" id="MF_00003"/>
    </source>
</evidence>
<name>RBFA_LIMRD</name>
<organism>
    <name type="scientific">Limosilactobacillus reuteri (strain DSM 20016)</name>
    <name type="common">Lactobacillus reuteri</name>
    <dbReference type="NCBI Taxonomy" id="557436"/>
    <lineage>
        <taxon>Bacteria</taxon>
        <taxon>Bacillati</taxon>
        <taxon>Bacillota</taxon>
        <taxon>Bacilli</taxon>
        <taxon>Lactobacillales</taxon>
        <taxon>Lactobacillaceae</taxon>
        <taxon>Limosilactobacillus</taxon>
    </lineage>
</organism>
<reference key="1">
    <citation type="journal article" date="2011" name="PLoS Genet.">
        <title>The evolution of host specialization in the vertebrate gut symbiont Lactobacillus reuteri.</title>
        <authorList>
            <person name="Frese S.A."/>
            <person name="Benson A.K."/>
            <person name="Tannock G.W."/>
            <person name="Loach D.M."/>
            <person name="Kim J."/>
            <person name="Zhang M."/>
            <person name="Oh P.L."/>
            <person name="Heng N.C."/>
            <person name="Patil P.B."/>
            <person name="Juge N."/>
            <person name="Mackenzie D.A."/>
            <person name="Pearson B.M."/>
            <person name="Lapidus A."/>
            <person name="Dalin E."/>
            <person name="Tice H."/>
            <person name="Goltsman E."/>
            <person name="Land M."/>
            <person name="Hauser L."/>
            <person name="Ivanova N."/>
            <person name="Kyrpides N.C."/>
            <person name="Walter J."/>
        </authorList>
    </citation>
    <scope>NUCLEOTIDE SEQUENCE [LARGE SCALE GENOMIC DNA]</scope>
    <source>
        <strain>DSM 20016</strain>
    </source>
</reference>
<comment type="function">
    <text evidence="1">One of several proteins that assist in the late maturation steps of the functional core of the 30S ribosomal subunit. Associates with free 30S ribosomal subunits (but not with 30S subunits that are part of 70S ribosomes or polysomes). Required for efficient processing of 16S rRNA. May interact with the 5'-terminal helix region of 16S rRNA.</text>
</comment>
<comment type="subunit">
    <text evidence="1">Monomer. Binds 30S ribosomal subunits, but not 50S ribosomal subunits or 70S ribosomes.</text>
</comment>
<comment type="subcellular location">
    <subcellularLocation>
        <location evidence="1">Cytoplasm</location>
    </subcellularLocation>
</comment>
<comment type="similarity">
    <text evidence="1">Belongs to the RbfA family.</text>
</comment>